<sequence length="326" mass="37341">MNGKIALEEHFATEETLMDSAGFVPDKDWPELRSRLLDIQDRRVRLMDEHGIETMILSLNAPAVQAIADSTRANETARRANDFLAEQVAKQPTRFRGFAALPMQDPELAARELERCVKELGFVGALVNGFSQDNRSAVPLYYDMAQYWPFWETVQALDVPFYLHPRNPLPSDARIYDGHAWLLGPTWAFGQETAVHALRLMGSGLFDKYPALKIILGHMGEGLPYSMWRIDHRNAWIKTTPKYPAKRKIVDYFNENFYLTTSGNFRTQTLIDAILEIGADRILFSTDWPFENIDHAADWFENTSISEADRKKIGWGNAQNLFKLNR</sequence>
<feature type="chain" id="PRO_0000454502" description="Gamma-resorcylate decarboxylase">
    <location>
        <begin position="1"/>
        <end position="326"/>
    </location>
</feature>
<feature type="active site" evidence="2">
    <location>
        <position position="287"/>
    </location>
</feature>
<feature type="binding site" evidence="1 6">
    <location>
        <position position="8"/>
    </location>
    <ligand>
        <name>Mn(2+)</name>
        <dbReference type="ChEBI" id="CHEBI:29035"/>
    </ligand>
</feature>
<feature type="binding site" evidence="1 6">
    <location>
        <position position="10"/>
    </location>
    <ligand>
        <name>Mn(2+)</name>
        <dbReference type="ChEBI" id="CHEBI:29035"/>
    </ligand>
</feature>
<feature type="binding site" evidence="1 6">
    <location>
        <position position="164"/>
    </location>
    <ligand>
        <name>Mn(2+)</name>
        <dbReference type="ChEBI" id="CHEBI:29035"/>
    </ligand>
</feature>
<feature type="binding site" evidence="1 6">
    <location>
        <position position="287"/>
    </location>
    <ligand>
        <name>Mn(2+)</name>
        <dbReference type="ChEBI" id="CHEBI:29035"/>
    </ligand>
</feature>
<feature type="strand" evidence="7">
    <location>
        <begin position="3"/>
        <end position="11"/>
    </location>
</feature>
<feature type="helix" evidence="7">
    <location>
        <begin position="14"/>
        <end position="17"/>
    </location>
</feature>
<feature type="helix" evidence="7">
    <location>
        <begin position="18"/>
        <end position="20"/>
    </location>
</feature>
<feature type="helix" evidence="7">
    <location>
        <begin position="26"/>
        <end position="28"/>
    </location>
</feature>
<feature type="helix" evidence="7">
    <location>
        <begin position="29"/>
        <end position="37"/>
    </location>
</feature>
<feature type="strand" evidence="7">
    <location>
        <begin position="39"/>
        <end position="41"/>
    </location>
</feature>
<feature type="helix" evidence="7">
    <location>
        <begin position="42"/>
        <end position="49"/>
    </location>
</feature>
<feature type="strand" evidence="7">
    <location>
        <begin position="52"/>
        <end position="59"/>
    </location>
</feature>
<feature type="helix" evidence="7">
    <location>
        <begin position="63"/>
        <end position="66"/>
    </location>
</feature>
<feature type="helix" evidence="7">
    <location>
        <begin position="70"/>
        <end position="90"/>
    </location>
</feature>
<feature type="turn" evidence="7">
    <location>
        <begin position="92"/>
        <end position="94"/>
    </location>
</feature>
<feature type="strand" evidence="7">
    <location>
        <begin position="95"/>
        <end position="97"/>
    </location>
</feature>
<feature type="helix" evidence="7">
    <location>
        <begin position="106"/>
        <end position="118"/>
    </location>
</feature>
<feature type="strand" evidence="7">
    <location>
        <begin position="125"/>
        <end position="131"/>
    </location>
</feature>
<feature type="helix" evidence="7">
    <location>
        <begin position="145"/>
        <end position="147"/>
    </location>
</feature>
<feature type="helix" evidence="7">
    <location>
        <begin position="148"/>
        <end position="157"/>
    </location>
</feature>
<feature type="strand" evidence="7">
    <location>
        <begin position="161"/>
        <end position="164"/>
    </location>
</feature>
<feature type="helix" evidence="7">
    <location>
        <begin position="170"/>
        <end position="172"/>
    </location>
</feature>
<feature type="helix" evidence="7">
    <location>
        <begin position="174"/>
        <end position="176"/>
    </location>
</feature>
<feature type="helix" evidence="7">
    <location>
        <begin position="180"/>
        <end position="182"/>
    </location>
</feature>
<feature type="helix" evidence="7">
    <location>
        <begin position="184"/>
        <end position="186"/>
    </location>
</feature>
<feature type="helix" evidence="7">
    <location>
        <begin position="188"/>
        <end position="202"/>
    </location>
</feature>
<feature type="helix" evidence="7">
    <location>
        <begin position="205"/>
        <end position="208"/>
    </location>
</feature>
<feature type="strand" evidence="7">
    <location>
        <begin position="214"/>
        <end position="217"/>
    </location>
</feature>
<feature type="helix" evidence="7">
    <location>
        <begin position="218"/>
        <end position="220"/>
    </location>
</feature>
<feature type="helix" evidence="7">
    <location>
        <begin position="223"/>
        <end position="232"/>
    </location>
</feature>
<feature type="turn" evidence="7">
    <location>
        <begin position="233"/>
        <end position="236"/>
    </location>
</feature>
<feature type="strand" evidence="7">
    <location>
        <begin position="242"/>
        <end position="244"/>
    </location>
</feature>
<feature type="helix" evidence="7">
    <location>
        <begin position="249"/>
        <end position="256"/>
    </location>
</feature>
<feature type="strand" evidence="7">
    <location>
        <begin position="257"/>
        <end position="260"/>
    </location>
</feature>
<feature type="helix" evidence="7">
    <location>
        <begin position="267"/>
        <end position="276"/>
    </location>
</feature>
<feature type="helix" evidence="7">
    <location>
        <begin position="279"/>
        <end position="281"/>
    </location>
</feature>
<feature type="turn" evidence="7">
    <location>
        <begin position="288"/>
        <end position="290"/>
    </location>
</feature>
<feature type="helix" evidence="7">
    <location>
        <begin position="293"/>
        <end position="302"/>
    </location>
</feature>
<feature type="strand" evidence="7">
    <location>
        <begin position="303"/>
        <end position="305"/>
    </location>
</feature>
<feature type="helix" evidence="7">
    <location>
        <begin position="307"/>
        <end position="314"/>
    </location>
</feature>
<feature type="helix" evidence="7">
    <location>
        <begin position="316"/>
        <end position="321"/>
    </location>
</feature>
<feature type="turn" evidence="7">
    <location>
        <begin position="322"/>
        <end position="325"/>
    </location>
</feature>
<name>GRDC_POLSJ</name>
<dbReference type="EC" id="4.1.1.103" evidence="1"/>
<dbReference type="EMBL" id="CP000316">
    <property type="protein sequence ID" value="ABE43991.1"/>
    <property type="molecule type" value="Genomic_DNA"/>
</dbReference>
<dbReference type="RefSeq" id="WP_011482990.1">
    <property type="nucleotide sequence ID" value="NC_007948.1"/>
</dbReference>
<dbReference type="PDB" id="3S4T">
    <property type="method" value="X-ray"/>
    <property type="resolution" value="1.90 A"/>
    <property type="chains" value="A/B/C/D/E/F/G/H=1-326"/>
</dbReference>
<dbReference type="PDB" id="4QRO">
    <property type="method" value="X-ray"/>
    <property type="resolution" value="1.65 A"/>
    <property type="chains" value="A/B/C/D/E/F/G/H=1-326"/>
</dbReference>
<dbReference type="PDBsum" id="3S4T"/>
<dbReference type="PDBsum" id="4QRO"/>
<dbReference type="SMR" id="Q12BV1"/>
<dbReference type="STRING" id="296591.Bpro_2061"/>
<dbReference type="KEGG" id="pol:Bpro_2061"/>
<dbReference type="eggNOG" id="COG2159">
    <property type="taxonomic scope" value="Bacteria"/>
</dbReference>
<dbReference type="HOGENOM" id="CLU_039329_5_0_4"/>
<dbReference type="OrthoDB" id="8673173at2"/>
<dbReference type="BRENDA" id="4.1.1.103">
    <property type="organism ID" value="15846"/>
</dbReference>
<dbReference type="STRENDA-DB" id="LOXWBN">
    <property type="experiment" value="Kinetic constants for gamma-Rescorcylate Decarboxylase (RSD)"/>
</dbReference>
<dbReference type="EvolutionaryTrace" id="Q12BV1"/>
<dbReference type="Proteomes" id="UP000001983">
    <property type="component" value="Chromosome"/>
</dbReference>
<dbReference type="GO" id="GO:0005829">
    <property type="term" value="C:cytosol"/>
    <property type="evidence" value="ECO:0007669"/>
    <property type="project" value="TreeGrafter"/>
</dbReference>
<dbReference type="GO" id="GO:0016831">
    <property type="term" value="F:carboxy-lyase activity"/>
    <property type="evidence" value="ECO:0007669"/>
    <property type="project" value="UniProtKB-KW"/>
</dbReference>
<dbReference type="GO" id="GO:0016787">
    <property type="term" value="F:hydrolase activity"/>
    <property type="evidence" value="ECO:0007669"/>
    <property type="project" value="InterPro"/>
</dbReference>
<dbReference type="GO" id="GO:0046872">
    <property type="term" value="F:metal ion binding"/>
    <property type="evidence" value="ECO:0007669"/>
    <property type="project" value="UniProtKB-KW"/>
</dbReference>
<dbReference type="GO" id="GO:0019748">
    <property type="term" value="P:secondary metabolic process"/>
    <property type="evidence" value="ECO:0007669"/>
    <property type="project" value="TreeGrafter"/>
</dbReference>
<dbReference type="Gene3D" id="3.20.20.140">
    <property type="entry name" value="Metal-dependent hydrolases"/>
    <property type="match status" value="1"/>
</dbReference>
<dbReference type="InterPro" id="IPR032465">
    <property type="entry name" value="ACMSD"/>
</dbReference>
<dbReference type="InterPro" id="IPR006680">
    <property type="entry name" value="Amidohydro-rel"/>
</dbReference>
<dbReference type="InterPro" id="IPR032466">
    <property type="entry name" value="Metal_Hydrolase"/>
</dbReference>
<dbReference type="PANTHER" id="PTHR21240">
    <property type="entry name" value="2-AMINO-3-CARBOXYLMUCONATE-6-SEMIALDEHYDE DECARBOXYLASE"/>
    <property type="match status" value="1"/>
</dbReference>
<dbReference type="PANTHER" id="PTHR21240:SF30">
    <property type="entry name" value="AMIDOHYDROLASE-RELATED DOMAIN-CONTAINING PROTEIN-RELATED"/>
    <property type="match status" value="1"/>
</dbReference>
<dbReference type="Pfam" id="PF04909">
    <property type="entry name" value="Amidohydro_2"/>
    <property type="match status" value="1"/>
</dbReference>
<dbReference type="SUPFAM" id="SSF51556">
    <property type="entry name" value="Metallo-dependent hydrolases"/>
    <property type="match status" value="1"/>
</dbReference>
<evidence type="ECO:0000269" key="1">
    <source>
    </source>
</evidence>
<evidence type="ECO:0000303" key="2">
    <source>
    </source>
</evidence>
<evidence type="ECO:0000305" key="3"/>
<evidence type="ECO:0000312" key="4">
    <source>
        <dbReference type="EMBL" id="ABE43991.1"/>
    </source>
</evidence>
<evidence type="ECO:0007744" key="5">
    <source>
        <dbReference type="PDB" id="3S4T"/>
    </source>
</evidence>
<evidence type="ECO:0007744" key="6">
    <source>
        <dbReference type="PDB" id="4QRO"/>
    </source>
</evidence>
<evidence type="ECO:0007829" key="7">
    <source>
        <dbReference type="PDB" id="4QRO"/>
    </source>
</evidence>
<comment type="function">
    <text evidence="1 3">Involved in the gamma-resorcylate (2,6-dihydroxybenzoate) catabolism (Probable). Catalyzes the reversible decarboxylation of gamma-resorcylate to resorcinol (PubMed:29283551). Also catalyzes the decarboxylation of 2,3-dihydroxybenzoate to catechol, 2,4,6-trihydroxybenzoate to benzene-1,3,5-triol, and 2,6-dihydroxy-4-methylbenzoate to 5-methylbenzene-1,3-diol (PubMed:29283551).</text>
</comment>
<comment type="catalytic activity">
    <reaction evidence="1">
        <text>2,6-dihydroxybenzoate + H(+) = resorcinol + CO2</text>
        <dbReference type="Rhea" id="RHEA:49464"/>
        <dbReference type="ChEBI" id="CHEBI:15378"/>
        <dbReference type="ChEBI" id="CHEBI:16526"/>
        <dbReference type="ChEBI" id="CHEBI:27810"/>
        <dbReference type="ChEBI" id="CHEBI:131450"/>
        <dbReference type="EC" id="4.1.1.103"/>
    </reaction>
</comment>
<comment type="catalytic activity">
    <reaction evidence="1">
        <text>2,3-dihydroxybenzoate + H(+) = catechol + CO2</text>
        <dbReference type="Rhea" id="RHEA:21492"/>
        <dbReference type="ChEBI" id="CHEBI:15378"/>
        <dbReference type="ChEBI" id="CHEBI:16526"/>
        <dbReference type="ChEBI" id="CHEBI:18135"/>
        <dbReference type="ChEBI" id="CHEBI:36654"/>
    </reaction>
</comment>
<comment type="cofactor">
    <cofactor evidence="1">
        <name>Mn(2+)</name>
        <dbReference type="ChEBI" id="CHEBI:29035"/>
    </cofactor>
    <text evidence="1">Binds 1 Mn(2+) ion per subunit.</text>
</comment>
<comment type="activity regulation">
    <text evidence="1">Activity is inhibited by 2-nitroresorcinol (2-NR).</text>
</comment>
<comment type="biophysicochemical properties">
    <kinetics>
        <KM evidence="1">32 uM for gamma-resorcylate</KM>
        <KM evidence="1">111 uM for 2,3-dihydroxybenzoate</KM>
        <KM evidence="1">48 uM for 2,4,6-trihydroxybenzoate</KM>
        <KM evidence="1">79 uM for 2,6-dihydroxy-4-methylbenzoate</KM>
        <text evidence="1">kcat is 0.44 sec(-1) with gamma-resorcylate as substrate. kcat is 0.47 sec(-1) with 2,3-dihydroxybenzoate as substrate. kcat is 0.18 sec(-1) with 2,4,6-trihydroxybenzoate as substrate. kcat is 0.38 sec(-1) with 2,6-dihydroxy-4-methylbenzoate as substrate.</text>
    </kinetics>
</comment>
<comment type="pathway">
    <text evidence="3">Aromatic compound metabolism.</text>
</comment>
<comment type="subunit">
    <text evidence="1">Homotetramer.</text>
</comment>
<comment type="similarity">
    <text evidence="3">Belongs to the metallo-dependent hydrolases superfamily. ACMSD family.</text>
</comment>
<organism>
    <name type="scientific">Polaromonas sp. (strain JS666 / ATCC BAA-500)</name>
    <dbReference type="NCBI Taxonomy" id="296591"/>
    <lineage>
        <taxon>Bacteria</taxon>
        <taxon>Pseudomonadati</taxon>
        <taxon>Pseudomonadota</taxon>
        <taxon>Betaproteobacteria</taxon>
        <taxon>Burkholderiales</taxon>
        <taxon>Comamonadaceae</taxon>
        <taxon>Polaromonas</taxon>
    </lineage>
</organism>
<gene>
    <name evidence="4" type="ordered locus">Bpro_2061</name>
</gene>
<accession>Q12BV1</accession>
<proteinExistence type="evidence at protein level"/>
<keyword id="KW-0002">3D-structure</keyword>
<keyword id="KW-0210">Decarboxylase</keyword>
<keyword id="KW-0456">Lyase</keyword>
<keyword id="KW-0464">Manganese</keyword>
<keyword id="KW-0479">Metal-binding</keyword>
<keyword id="KW-1185">Reference proteome</keyword>
<reference key="1">
    <citation type="journal article" date="2008" name="Appl. Environ. Microbiol.">
        <title>The genome of Polaromonas sp. strain JS666: insights into the evolution of a hydrocarbon- and xenobiotic-degrading bacterium, and features of relevance to biotechnology.</title>
        <authorList>
            <person name="Mattes T.E."/>
            <person name="Alexander A.K."/>
            <person name="Richardson P.M."/>
            <person name="Munk A.C."/>
            <person name="Han C.S."/>
            <person name="Stothard P."/>
            <person name="Coleman N.V."/>
        </authorList>
    </citation>
    <scope>NUCLEOTIDE SEQUENCE [LARGE SCALE GENOMIC DNA]</scope>
    <source>
        <strain>JS666 / ATCC BAA-500</strain>
    </source>
</reference>
<reference evidence="5" key="2">
    <citation type="submission" date="2011-05" db="PDB data bank">
        <title>Crystal structure of putative amidohydrolase-2 (EFI-target 500288) from Polaromonas sp. JS666.</title>
        <authorList>
            <person name="Ramagopal U.A."/>
            <person name="Toro R."/>
            <person name="Girlt J.A."/>
            <person name="Almo S.C."/>
        </authorList>
    </citation>
    <scope>X-RAY CRYSTALLOGRAPHY (1.90 ANGSTROMS)</scope>
    <source>
        <strain>JS666 / ATCC BAA-500</strain>
    </source>
</reference>
<reference evidence="6" key="3">
    <citation type="journal article" date="2018" name="Biochemistry">
        <title>Mechanism and structure of gamma-resorcylate decarboxylase.</title>
        <authorList>
            <person name="Sheng X."/>
            <person name="Patskovsky Y."/>
            <person name="Vladimirova A."/>
            <person name="Bonanno J.B."/>
            <person name="Almo S.C."/>
            <person name="Himo F."/>
            <person name="Raushel F.M."/>
        </authorList>
    </citation>
    <scope>X-RAY CRYSTALLOGRAPHY (1.65 ANGSTROMS) IN COMPLEX WITH MANGANESE AND THE INHIBITOR 2-NITRORESORCINOL</scope>
    <scope>FUNCTION</scope>
    <scope>CATALYTIC ACTIVITY</scope>
    <scope>REACTION MECHANISM</scope>
    <scope>COFACTOR</scope>
    <scope>ACTIVITY REGULATION</scope>
    <scope>BIOPHYSICOCHEMICAL PROPERTIES</scope>
    <scope>SUBUNIT</scope>
    <scope>ACTIVE SITE</scope>
    <source>
        <strain>JS666 / ATCC BAA-500</strain>
    </source>
</reference>
<protein>
    <recommendedName>
        <fullName evidence="2">Gamma-resorcylate decarboxylase</fullName>
        <shortName evidence="2">Gamma-RSD</shortName>
        <ecNumber evidence="1">4.1.1.103</ecNumber>
    </recommendedName>
    <alternativeName>
        <fullName evidence="2">2,6-dihydroxybenzoate decarboxylase</fullName>
        <shortName evidence="2">2,6-DHBD</shortName>
    </alternativeName>
</protein>